<proteinExistence type="inferred from homology"/>
<organism>
    <name type="scientific">Vibrio cholerae serotype O1 (strain ATCC 39315 / El Tor Inaba N16961)</name>
    <dbReference type="NCBI Taxonomy" id="243277"/>
    <lineage>
        <taxon>Bacteria</taxon>
        <taxon>Pseudomonadati</taxon>
        <taxon>Pseudomonadota</taxon>
        <taxon>Gammaproteobacteria</taxon>
        <taxon>Vibrionales</taxon>
        <taxon>Vibrionaceae</taxon>
        <taxon>Vibrio</taxon>
    </lineage>
</organism>
<feature type="chain" id="PRO_0000119691" description="Glutamate--tRNA ligase">
    <location>
        <begin position="1"/>
        <end position="474"/>
    </location>
</feature>
<feature type="short sequence motif" description="'HIGH' region" evidence="1">
    <location>
        <begin position="9"/>
        <end position="19"/>
    </location>
</feature>
<feature type="short sequence motif" description="'KMSKS' region" evidence="1">
    <location>
        <begin position="240"/>
        <end position="244"/>
    </location>
</feature>
<feature type="binding site" evidence="1">
    <location>
        <position position="243"/>
    </location>
    <ligand>
        <name>ATP</name>
        <dbReference type="ChEBI" id="CHEBI:30616"/>
    </ligand>
</feature>
<dbReference type="EC" id="6.1.1.17" evidence="1"/>
<dbReference type="EMBL" id="AE003852">
    <property type="protein sequence ID" value="AAF95358.1"/>
    <property type="status" value="ALT_INIT"/>
    <property type="molecule type" value="Genomic_DNA"/>
</dbReference>
<dbReference type="PIR" id="G82104">
    <property type="entry name" value="G82104"/>
</dbReference>
<dbReference type="RefSeq" id="NP_231845.1">
    <property type="nucleotide sequence ID" value="NC_002505.1"/>
</dbReference>
<dbReference type="RefSeq" id="WP_000216841.1">
    <property type="nucleotide sequence ID" value="NZ_LT906614.1"/>
</dbReference>
<dbReference type="SMR" id="P0C6Q1"/>
<dbReference type="STRING" id="243277.VC_2214"/>
<dbReference type="DNASU" id="2613253"/>
<dbReference type="EnsemblBacteria" id="AAF95358">
    <property type="protein sequence ID" value="AAF95358"/>
    <property type="gene ID" value="VC_2214"/>
</dbReference>
<dbReference type="KEGG" id="vch:VC_2214"/>
<dbReference type="PATRIC" id="fig|243277.26.peg.2112"/>
<dbReference type="eggNOG" id="COG0008">
    <property type="taxonomic scope" value="Bacteria"/>
</dbReference>
<dbReference type="HOGENOM" id="CLU_015768_6_3_6"/>
<dbReference type="Proteomes" id="UP000000584">
    <property type="component" value="Chromosome 1"/>
</dbReference>
<dbReference type="GO" id="GO:0005829">
    <property type="term" value="C:cytosol"/>
    <property type="evidence" value="ECO:0000318"/>
    <property type="project" value="GO_Central"/>
</dbReference>
<dbReference type="GO" id="GO:0005524">
    <property type="term" value="F:ATP binding"/>
    <property type="evidence" value="ECO:0007669"/>
    <property type="project" value="UniProtKB-UniRule"/>
</dbReference>
<dbReference type="GO" id="GO:0004818">
    <property type="term" value="F:glutamate-tRNA ligase activity"/>
    <property type="evidence" value="ECO:0000318"/>
    <property type="project" value="GO_Central"/>
</dbReference>
<dbReference type="GO" id="GO:0000049">
    <property type="term" value="F:tRNA binding"/>
    <property type="evidence" value="ECO:0007669"/>
    <property type="project" value="InterPro"/>
</dbReference>
<dbReference type="GO" id="GO:0008270">
    <property type="term" value="F:zinc ion binding"/>
    <property type="evidence" value="ECO:0007669"/>
    <property type="project" value="InterPro"/>
</dbReference>
<dbReference type="GO" id="GO:0006424">
    <property type="term" value="P:glutamyl-tRNA aminoacylation"/>
    <property type="evidence" value="ECO:0000318"/>
    <property type="project" value="GO_Central"/>
</dbReference>
<dbReference type="CDD" id="cd00808">
    <property type="entry name" value="GluRS_core"/>
    <property type="match status" value="1"/>
</dbReference>
<dbReference type="FunFam" id="1.10.10.350:FF:000001">
    <property type="entry name" value="Glutamate--tRNA ligase"/>
    <property type="match status" value="1"/>
</dbReference>
<dbReference type="FunFam" id="3.40.50.620:FF:000007">
    <property type="entry name" value="Glutamate--tRNA ligase"/>
    <property type="match status" value="1"/>
</dbReference>
<dbReference type="Gene3D" id="1.10.10.350">
    <property type="match status" value="1"/>
</dbReference>
<dbReference type="Gene3D" id="3.40.50.620">
    <property type="entry name" value="HUPs"/>
    <property type="match status" value="1"/>
</dbReference>
<dbReference type="HAMAP" id="MF_00022">
    <property type="entry name" value="Glu_tRNA_synth_type1"/>
    <property type="match status" value="1"/>
</dbReference>
<dbReference type="InterPro" id="IPR045462">
    <property type="entry name" value="aa-tRNA-synth_I_cd-bd"/>
</dbReference>
<dbReference type="InterPro" id="IPR020751">
    <property type="entry name" value="aa-tRNA-synth_I_codon-bd_sub2"/>
</dbReference>
<dbReference type="InterPro" id="IPR001412">
    <property type="entry name" value="aa-tRNA-synth_I_CS"/>
</dbReference>
<dbReference type="InterPro" id="IPR008925">
    <property type="entry name" value="aa_tRNA-synth_I_cd-bd_sf"/>
</dbReference>
<dbReference type="InterPro" id="IPR004527">
    <property type="entry name" value="Glu-tRNA-ligase_bac/mito"/>
</dbReference>
<dbReference type="InterPro" id="IPR000924">
    <property type="entry name" value="Glu/Gln-tRNA-synth"/>
</dbReference>
<dbReference type="InterPro" id="IPR020058">
    <property type="entry name" value="Glu/Gln-tRNA-synth_Ib_cat-dom"/>
</dbReference>
<dbReference type="InterPro" id="IPR049940">
    <property type="entry name" value="GluQ/Sye"/>
</dbReference>
<dbReference type="InterPro" id="IPR033910">
    <property type="entry name" value="GluRS_core"/>
</dbReference>
<dbReference type="InterPro" id="IPR014729">
    <property type="entry name" value="Rossmann-like_a/b/a_fold"/>
</dbReference>
<dbReference type="NCBIfam" id="TIGR00464">
    <property type="entry name" value="gltX_bact"/>
    <property type="match status" value="1"/>
</dbReference>
<dbReference type="PANTHER" id="PTHR43311">
    <property type="entry name" value="GLUTAMATE--TRNA LIGASE"/>
    <property type="match status" value="1"/>
</dbReference>
<dbReference type="PANTHER" id="PTHR43311:SF2">
    <property type="entry name" value="GLUTAMATE--TRNA LIGASE, MITOCHONDRIAL-RELATED"/>
    <property type="match status" value="1"/>
</dbReference>
<dbReference type="Pfam" id="PF19269">
    <property type="entry name" value="Anticodon_2"/>
    <property type="match status" value="1"/>
</dbReference>
<dbReference type="Pfam" id="PF00749">
    <property type="entry name" value="tRNA-synt_1c"/>
    <property type="match status" value="1"/>
</dbReference>
<dbReference type="PRINTS" id="PR00987">
    <property type="entry name" value="TRNASYNTHGLU"/>
</dbReference>
<dbReference type="SUPFAM" id="SSF48163">
    <property type="entry name" value="An anticodon-binding domain of class I aminoacyl-tRNA synthetases"/>
    <property type="match status" value="1"/>
</dbReference>
<dbReference type="SUPFAM" id="SSF52374">
    <property type="entry name" value="Nucleotidylyl transferase"/>
    <property type="match status" value="1"/>
</dbReference>
<dbReference type="PROSITE" id="PS00178">
    <property type="entry name" value="AA_TRNA_LIGASE_I"/>
    <property type="match status" value="1"/>
</dbReference>
<reference key="1">
    <citation type="journal article" date="2000" name="Nature">
        <title>DNA sequence of both chromosomes of the cholera pathogen Vibrio cholerae.</title>
        <authorList>
            <person name="Heidelberg J.F."/>
            <person name="Eisen J.A."/>
            <person name="Nelson W.C."/>
            <person name="Clayton R.A."/>
            <person name="Gwinn M.L."/>
            <person name="Dodson R.J."/>
            <person name="Haft D.H."/>
            <person name="Hickey E.K."/>
            <person name="Peterson J.D."/>
            <person name="Umayam L.A."/>
            <person name="Gill S.R."/>
            <person name="Nelson K.E."/>
            <person name="Read T.D."/>
            <person name="Tettelin H."/>
            <person name="Richardson D.L."/>
            <person name="Ermolaeva M.D."/>
            <person name="Vamathevan J.J."/>
            <person name="Bass S."/>
            <person name="Qin H."/>
            <person name="Dragoi I."/>
            <person name="Sellers P."/>
            <person name="McDonald L.A."/>
            <person name="Utterback T.R."/>
            <person name="Fleischmann R.D."/>
            <person name="Nierman W.C."/>
            <person name="White O."/>
            <person name="Salzberg S.L."/>
            <person name="Smith H.O."/>
            <person name="Colwell R.R."/>
            <person name="Mekalanos J.J."/>
            <person name="Venter J.C."/>
            <person name="Fraser C.M."/>
        </authorList>
    </citation>
    <scope>NUCLEOTIDE SEQUENCE [LARGE SCALE GENOMIC DNA]</scope>
    <source>
        <strain>ATCC 39315 / El Tor Inaba N16961</strain>
    </source>
</reference>
<comment type="function">
    <text evidence="1">Catalyzes the attachment of glutamate to tRNA(Glu) in a two-step reaction: glutamate is first activated by ATP to form Glu-AMP and then transferred to the acceptor end of tRNA(Glu).</text>
</comment>
<comment type="catalytic activity">
    <reaction evidence="1">
        <text>tRNA(Glu) + L-glutamate + ATP = L-glutamyl-tRNA(Glu) + AMP + diphosphate</text>
        <dbReference type="Rhea" id="RHEA:23540"/>
        <dbReference type="Rhea" id="RHEA-COMP:9663"/>
        <dbReference type="Rhea" id="RHEA-COMP:9680"/>
        <dbReference type="ChEBI" id="CHEBI:29985"/>
        <dbReference type="ChEBI" id="CHEBI:30616"/>
        <dbReference type="ChEBI" id="CHEBI:33019"/>
        <dbReference type="ChEBI" id="CHEBI:78442"/>
        <dbReference type="ChEBI" id="CHEBI:78520"/>
        <dbReference type="ChEBI" id="CHEBI:456215"/>
        <dbReference type="EC" id="6.1.1.17"/>
    </reaction>
</comment>
<comment type="subunit">
    <text evidence="1">Monomer.</text>
</comment>
<comment type="subcellular location">
    <subcellularLocation>
        <location evidence="1">Cytoplasm</location>
    </subcellularLocation>
</comment>
<comment type="similarity">
    <text evidence="1">Belongs to the class-I aminoacyl-tRNA synthetase family. Glutamate--tRNA ligase type 1 subfamily.</text>
</comment>
<comment type="sequence caution" evidence="2">
    <conflict type="erroneous initiation">
        <sequence resource="EMBL-CDS" id="AAF95358"/>
    </conflict>
</comment>
<accession>P0C6Q1</accession>
<accession>O31153</accession>
<accession>Q9KPZ8</accession>
<evidence type="ECO:0000255" key="1">
    <source>
        <dbReference type="HAMAP-Rule" id="MF_00022"/>
    </source>
</evidence>
<evidence type="ECO:0000305" key="2"/>
<name>SYE_VIBCH</name>
<sequence length="474" mass="53379">MTVKTRFAPSPTGYLHVGGARTALYSWLYAKSQGGEFVLRIEDTDLERSTQAAVDAIIEGMTWLGLEWDEGPYYQTKRFDRYNQVIDQLLAEGKAYKCYAPKELLDEIRAEQEANKEMPRYDANHPKIKAVNDAAKEGEPCCIRFRNPKEGSVVFDDQIRGRIEIRNDQLDDLIIRRTDGTPTYNFCVVVDDVDMGISHVIRGEDHINNTPRQINIYKAMGATIPTFAHCAMILGDDGAKLSKRHGAVSVMQYRDDGYLPEALLNYLVRLGWGHGDQEIFSRDEMINLFSLNAISKSASAFNTDKLLWLNNHYIKTSEPEYVAKHLEWHFENQGINKATGPALAEVVKLVGERCNTLVELAQQSRYFYEDFAEFDADAAKKHLRGVAKEPLMLALSKIEALTEWNTEALHHVIAQVCEELEIGMGKIGMPLRVAVTGGGQSPSVDAVMNLIGQERVIARIKMALEYIETREANA</sequence>
<gene>
    <name evidence="1" type="primary">gltX</name>
    <name type="ordered locus">VC_2214</name>
</gene>
<keyword id="KW-0030">Aminoacyl-tRNA synthetase</keyword>
<keyword id="KW-0067">ATP-binding</keyword>
<keyword id="KW-0963">Cytoplasm</keyword>
<keyword id="KW-0436">Ligase</keyword>
<keyword id="KW-0547">Nucleotide-binding</keyword>
<keyword id="KW-0648">Protein biosynthesis</keyword>
<keyword id="KW-1185">Reference proteome</keyword>
<protein>
    <recommendedName>
        <fullName evidence="1">Glutamate--tRNA ligase</fullName>
        <ecNumber evidence="1">6.1.1.17</ecNumber>
    </recommendedName>
    <alternativeName>
        <fullName evidence="1">Glutamyl-tRNA synthetase</fullName>
        <shortName evidence="1">GluRS</shortName>
    </alternativeName>
</protein>